<organism>
    <name type="scientific">Clostridium botulinum (strain Loch Maree / Type A3)</name>
    <dbReference type="NCBI Taxonomy" id="498214"/>
    <lineage>
        <taxon>Bacteria</taxon>
        <taxon>Bacillati</taxon>
        <taxon>Bacillota</taxon>
        <taxon>Clostridia</taxon>
        <taxon>Eubacteriales</taxon>
        <taxon>Clostridiaceae</taxon>
        <taxon>Clostridium</taxon>
    </lineage>
</organism>
<dbReference type="EC" id="1.1.1.27" evidence="1"/>
<dbReference type="EMBL" id="CP000962">
    <property type="protein sequence ID" value="ACA55684.1"/>
    <property type="molecule type" value="Genomic_DNA"/>
</dbReference>
<dbReference type="RefSeq" id="WP_012343637.1">
    <property type="nucleotide sequence ID" value="NC_010520.1"/>
</dbReference>
<dbReference type="SMR" id="B1L1N3"/>
<dbReference type="KEGG" id="cbl:CLK_0997"/>
<dbReference type="HOGENOM" id="CLU_045401_1_1_9"/>
<dbReference type="UniPathway" id="UPA00554">
    <property type="reaction ID" value="UER00611"/>
</dbReference>
<dbReference type="GO" id="GO:0005737">
    <property type="term" value="C:cytoplasm"/>
    <property type="evidence" value="ECO:0007669"/>
    <property type="project" value="UniProtKB-SubCell"/>
</dbReference>
<dbReference type="GO" id="GO:0004459">
    <property type="term" value="F:L-lactate dehydrogenase activity"/>
    <property type="evidence" value="ECO:0007669"/>
    <property type="project" value="UniProtKB-UniRule"/>
</dbReference>
<dbReference type="GO" id="GO:0006096">
    <property type="term" value="P:glycolytic process"/>
    <property type="evidence" value="ECO:0007669"/>
    <property type="project" value="UniProtKB-UniRule"/>
</dbReference>
<dbReference type="GO" id="GO:0006089">
    <property type="term" value="P:lactate metabolic process"/>
    <property type="evidence" value="ECO:0007669"/>
    <property type="project" value="TreeGrafter"/>
</dbReference>
<dbReference type="CDD" id="cd05292">
    <property type="entry name" value="LDH_2"/>
    <property type="match status" value="1"/>
</dbReference>
<dbReference type="FunFam" id="3.40.50.720:FF:000018">
    <property type="entry name" value="Malate dehydrogenase"/>
    <property type="match status" value="1"/>
</dbReference>
<dbReference type="Gene3D" id="3.90.110.10">
    <property type="entry name" value="Lactate dehydrogenase/glycoside hydrolase, family 4, C-terminal"/>
    <property type="match status" value="1"/>
</dbReference>
<dbReference type="Gene3D" id="3.40.50.720">
    <property type="entry name" value="NAD(P)-binding Rossmann-like Domain"/>
    <property type="match status" value="1"/>
</dbReference>
<dbReference type="HAMAP" id="MF_00488">
    <property type="entry name" value="Lactate_dehydrog"/>
    <property type="match status" value="1"/>
</dbReference>
<dbReference type="InterPro" id="IPR001557">
    <property type="entry name" value="L-lactate/malate_DH"/>
</dbReference>
<dbReference type="InterPro" id="IPR011304">
    <property type="entry name" value="L-lactate_DH"/>
</dbReference>
<dbReference type="InterPro" id="IPR018177">
    <property type="entry name" value="L-lactate_DH_AS"/>
</dbReference>
<dbReference type="InterPro" id="IPR022383">
    <property type="entry name" value="Lactate/malate_DH_C"/>
</dbReference>
<dbReference type="InterPro" id="IPR001236">
    <property type="entry name" value="Lactate/malate_DH_N"/>
</dbReference>
<dbReference type="InterPro" id="IPR015955">
    <property type="entry name" value="Lactate_DH/Glyco_Ohase_4_C"/>
</dbReference>
<dbReference type="InterPro" id="IPR036291">
    <property type="entry name" value="NAD(P)-bd_dom_sf"/>
</dbReference>
<dbReference type="NCBIfam" id="TIGR01771">
    <property type="entry name" value="L-LDH-NAD"/>
    <property type="match status" value="1"/>
</dbReference>
<dbReference type="NCBIfam" id="NF000824">
    <property type="entry name" value="PRK00066.1"/>
    <property type="match status" value="1"/>
</dbReference>
<dbReference type="NCBIfam" id="NF004863">
    <property type="entry name" value="PRK06223.1"/>
    <property type="match status" value="1"/>
</dbReference>
<dbReference type="PANTHER" id="PTHR43128">
    <property type="entry name" value="L-2-HYDROXYCARBOXYLATE DEHYDROGENASE (NAD(P)(+))"/>
    <property type="match status" value="1"/>
</dbReference>
<dbReference type="PANTHER" id="PTHR43128:SF16">
    <property type="entry name" value="L-LACTATE DEHYDROGENASE"/>
    <property type="match status" value="1"/>
</dbReference>
<dbReference type="Pfam" id="PF02866">
    <property type="entry name" value="Ldh_1_C"/>
    <property type="match status" value="1"/>
</dbReference>
<dbReference type="Pfam" id="PF00056">
    <property type="entry name" value="Ldh_1_N"/>
    <property type="match status" value="1"/>
</dbReference>
<dbReference type="PIRSF" id="PIRSF000102">
    <property type="entry name" value="Lac_mal_DH"/>
    <property type="match status" value="1"/>
</dbReference>
<dbReference type="PRINTS" id="PR00086">
    <property type="entry name" value="LLDHDRGNASE"/>
</dbReference>
<dbReference type="SUPFAM" id="SSF56327">
    <property type="entry name" value="LDH C-terminal domain-like"/>
    <property type="match status" value="1"/>
</dbReference>
<dbReference type="SUPFAM" id="SSF51735">
    <property type="entry name" value="NAD(P)-binding Rossmann-fold domains"/>
    <property type="match status" value="1"/>
</dbReference>
<dbReference type="PROSITE" id="PS00064">
    <property type="entry name" value="L_LDH"/>
    <property type="match status" value="1"/>
</dbReference>
<feature type="chain" id="PRO_1000126156" description="L-lactate dehydrogenase">
    <location>
        <begin position="1"/>
        <end position="318"/>
    </location>
</feature>
<feature type="active site" description="Proton acceptor" evidence="1">
    <location>
        <position position="179"/>
    </location>
</feature>
<feature type="binding site" evidence="1">
    <location>
        <position position="18"/>
    </location>
    <ligand>
        <name>NAD(+)</name>
        <dbReference type="ChEBI" id="CHEBI:57540"/>
    </ligand>
</feature>
<feature type="binding site" evidence="1">
    <location>
        <position position="39"/>
    </location>
    <ligand>
        <name>NAD(+)</name>
        <dbReference type="ChEBI" id="CHEBI:57540"/>
    </ligand>
</feature>
<feature type="binding site" evidence="1">
    <location>
        <position position="44"/>
    </location>
    <ligand>
        <name>NAD(+)</name>
        <dbReference type="ChEBI" id="CHEBI:57540"/>
    </ligand>
</feature>
<feature type="binding site" evidence="1">
    <location>
        <position position="69"/>
    </location>
    <ligand>
        <name>NAD(+)</name>
        <dbReference type="ChEBI" id="CHEBI:57540"/>
    </ligand>
</feature>
<feature type="binding site" evidence="1">
    <location>
        <begin position="83"/>
        <end position="84"/>
    </location>
    <ligand>
        <name>NAD(+)</name>
        <dbReference type="ChEBI" id="CHEBI:57540"/>
    </ligand>
</feature>
<feature type="binding site" evidence="1">
    <location>
        <position position="86"/>
    </location>
    <ligand>
        <name>substrate</name>
    </ligand>
</feature>
<feature type="binding site" evidence="1">
    <location>
        <position position="92"/>
    </location>
    <ligand>
        <name>substrate</name>
    </ligand>
</feature>
<feature type="binding site" evidence="1">
    <location>
        <position position="105"/>
    </location>
    <ligand>
        <name>NAD(+)</name>
        <dbReference type="ChEBI" id="CHEBI:57540"/>
    </ligand>
</feature>
<feature type="binding site" evidence="1">
    <location>
        <begin position="122"/>
        <end position="124"/>
    </location>
    <ligand>
        <name>NAD(+)</name>
        <dbReference type="ChEBI" id="CHEBI:57540"/>
    </ligand>
</feature>
<feature type="binding site" evidence="1">
    <location>
        <begin position="124"/>
        <end position="127"/>
    </location>
    <ligand>
        <name>substrate</name>
    </ligand>
</feature>
<feature type="binding site" evidence="1">
    <location>
        <position position="147"/>
    </location>
    <ligand>
        <name>NAD(+)</name>
        <dbReference type="ChEBI" id="CHEBI:57540"/>
    </ligand>
</feature>
<feature type="binding site" evidence="1">
    <location>
        <begin position="152"/>
        <end position="155"/>
    </location>
    <ligand>
        <name>substrate</name>
    </ligand>
</feature>
<feature type="binding site" evidence="1">
    <location>
        <position position="234"/>
    </location>
    <ligand>
        <name>substrate</name>
    </ligand>
</feature>
<feature type="modified residue" description="Phosphotyrosine" evidence="1">
    <location>
        <position position="225"/>
    </location>
</feature>
<accession>B1L1N3</accession>
<gene>
    <name evidence="1" type="primary">ldh</name>
    <name type="ordered locus">CLK_0997</name>
</gene>
<reference key="1">
    <citation type="journal article" date="2007" name="PLoS ONE">
        <title>Analysis of the neurotoxin complex genes in Clostridium botulinum A1-A4 and B1 strains: BoNT/A3, /Ba4 and /B1 clusters are located within plasmids.</title>
        <authorList>
            <person name="Smith T.J."/>
            <person name="Hill K.K."/>
            <person name="Foley B.T."/>
            <person name="Detter J.C."/>
            <person name="Munk A.C."/>
            <person name="Bruce D.C."/>
            <person name="Doggett N.A."/>
            <person name="Smith L.A."/>
            <person name="Marks J.D."/>
            <person name="Xie G."/>
            <person name="Brettin T.S."/>
        </authorList>
    </citation>
    <scope>NUCLEOTIDE SEQUENCE [LARGE SCALE GENOMIC DNA]</scope>
    <source>
        <strain>Loch Maree / Type A3</strain>
    </source>
</reference>
<evidence type="ECO:0000255" key="1">
    <source>
        <dbReference type="HAMAP-Rule" id="MF_00488"/>
    </source>
</evidence>
<keyword id="KW-0963">Cytoplasm</keyword>
<keyword id="KW-0520">NAD</keyword>
<keyword id="KW-0560">Oxidoreductase</keyword>
<keyword id="KW-0597">Phosphoprotein</keyword>
<name>LDH_CLOBM</name>
<comment type="function">
    <text evidence="1">Catalyzes the conversion of lactate to pyruvate.</text>
</comment>
<comment type="catalytic activity">
    <reaction evidence="1">
        <text>(S)-lactate + NAD(+) = pyruvate + NADH + H(+)</text>
        <dbReference type="Rhea" id="RHEA:23444"/>
        <dbReference type="ChEBI" id="CHEBI:15361"/>
        <dbReference type="ChEBI" id="CHEBI:15378"/>
        <dbReference type="ChEBI" id="CHEBI:16651"/>
        <dbReference type="ChEBI" id="CHEBI:57540"/>
        <dbReference type="ChEBI" id="CHEBI:57945"/>
        <dbReference type="EC" id="1.1.1.27"/>
    </reaction>
</comment>
<comment type="pathway">
    <text evidence="1">Fermentation; pyruvate fermentation to lactate; (S)-lactate from pyruvate: step 1/1.</text>
</comment>
<comment type="subunit">
    <text evidence="1">Homotetramer.</text>
</comment>
<comment type="subcellular location">
    <subcellularLocation>
        <location evidence="1">Cytoplasm</location>
    </subcellularLocation>
</comment>
<comment type="similarity">
    <text evidence="1">Belongs to the LDH/MDH superfamily. LDH family.</text>
</comment>
<sequence>MIKKRNTTKISVIGAGSVGATTAYALMLSGVATEIVLVDVNKSKTEGEAMDLSHGADFVKPVNILSGDYKDTESSDIVVITAGAAQKVGETRLQLINKNINIFKSIIPEVVKYNKDAILLVVSNPVDVLSYVTYKLSGFPKERVIGSGTVLDTSRLKHEIGKRYKIDPRNVNTYIMGEHGDSEIATWSVTNIQNIKIDEYANKENLEYNDNFRKEVYENVKNAAYEVINRKGATFYAIALAVTRIVKAILGDEKTILPVSTLVENYYGIKDVYLGMPCIVGGSGIEKALSIDLNKTEASKLVKSAETLKNTLNNASGL</sequence>
<protein>
    <recommendedName>
        <fullName evidence="1">L-lactate dehydrogenase</fullName>
        <shortName evidence="1">L-LDH</shortName>
        <ecNumber evidence="1">1.1.1.27</ecNumber>
    </recommendedName>
</protein>
<proteinExistence type="inferred from homology"/>